<gene>
    <name evidence="15" type="primary">floT</name>
    <name evidence="14" type="synonym">yuaG</name>
    <name type="synonym">yuaH</name>
    <name type="ordered locus">BSU31010</name>
</gene>
<organism>
    <name type="scientific">Bacillus subtilis (strain 168)</name>
    <dbReference type="NCBI Taxonomy" id="224308"/>
    <lineage>
        <taxon>Bacteria</taxon>
        <taxon>Bacillati</taxon>
        <taxon>Bacillota</taxon>
        <taxon>Bacilli</taxon>
        <taxon>Bacillales</taxon>
        <taxon>Bacillaceae</taxon>
        <taxon>Bacillus</taxon>
    </lineage>
</organism>
<sequence length="509" mass="55994">MTMPIIMIIGVVFFLLIALIAVFITKYRTAGPDEALIVTGSYLGNKNVHVDEGGNRIKIVRGGGTFVLPVFQQAEPLSLLSSKLDVSTPEVYTEQGVPVMADGTAIIKIGGSIGEIATAAEQFLGKSKDDREQEAREVLEGHLRSILGSMTVEEIYKNREKFSQEVQRVASQDLAKMGLVIVSFTIKDVRDKNGYLESLGKPRIAQVKRDADIATAEADKETRIKRAEADKDAKKSELERATEIAEAEKINQLKMAEFRREQDTAKANADQAYDLETARARQQVTEQEMQVKIIERQKQIELEEKEILRRERQYDSEVKKKADADRYSVEQSAAAEKAKQLAEADAKKYSIEAMAKAEAEKVRIDGLAKAEAEKAKGETEAEVIRLKGLAEAEAKEKIAAAFEQYGQAAIFDMIVKMLPEYAKQAAAPLSNIDKITVVDTGGSGESSGANKVTSYATNLMSSLQESLKASSGIDVKEMLENFSGKGNVKQSINELTNEIKEAKTIQKSE</sequence>
<comment type="function">
    <text evidence="1 2 3 5 6 7 9 10 12 18 21">Found in functional membrane microdomains (FMM) that may be equivalent to eukaryotic membrane rafts. FMMs are highly dynamic and increase in number as cells age. FloA and FloT function is partially redundant; double deletions have marked synthetic phenotypes (PubMed:20713508, PubMed:22753055, PubMed:25909364, PubMed:27362352). Flotillins are thought to be important factors in membrane fluidity, especially during periods of rapid growth in rich media (Probable). Whether specific proteins are associated with FMMs is controversial; in one study FloT rafts have been shown to include proteins involved in adaptation to stationary phase, while FloA-FloT rafts include proteins involved in differentiation including sporulation, biofilm formation and DNA uptake competence. Another (more finely resolved) study only showed association of NfeD2 with FloT rafts of all the proteins examined (PubMed:25909364, PubMed:27362352). Aids homooligomerization of KinC and KinD but not KinB, may prevent incorrect hetero-association of the above kinases (PubMed:26297017). Simultaneous overexpression of both FloA and FloT leads to defects in cell division and differentiation, in part caused by stabilization of FtsH and its subsequent increased ability to degrade proteins. Cells make more biofilm, are about half as long, have less EzrA and more frequent Z-rings (PubMed:24222488). Involved in spatial organization of membranes, perhaps recruiting proteins (e.g. NfeD2) to specific membrane regions (Probable) (PubMed:23651456). Plays a role in phosphorylation of master regulator Spo0A, an early sporulation event (PubMed:19383680). Plays a non-redundant role with dynamin-like protein A (dynA) in membrane dynamics and cell shape (PubMed:23249255).</text>
</comment>
<comment type="subunit">
    <text evidence="6 9 10 12 19">Homooligomerizes (PubMed:25909364). Oligomerizes in very large complexes in vitro. Interacts with FloA, FtsH, FtsX, OppA, SdhA and SecY in detergent-resistant membrane (DRM) fractions (PubMed:23651456). Interacts with FtsH at midcell (Probable). Interacts with FloA (PubMed:25909364). Interacts in vivo with KinC, FloA, FtsH and ResE (PubMed:26297017). Interacts with ResE, colocalizes with ResE in FloT-only membrane rafts (PubMed:25909364). Another study shows nearly complete colocalization with NfeD2, but only minor colocalization with FtsH or KinC (PubMed:27362352).</text>
</comment>
<comment type="subcellular location">
    <subcellularLocation>
        <location evidence="1 2 3 4 6 9 20">Cell membrane</location>
    </subcellularLocation>
    <subcellularLocation>
        <location evidence="2 3 4 5 6 9 12 17">Membrane raft</location>
    </subcellularLocation>
    <text evidence="1 2 3 4 5 6 8 9 12">Tethered to the membrane by a hairpin loop that inserts into the cell membrane (PubMed:25635948). A few foci are seen on the cell membrane during exponential growth, more are seen as cells enter stationary phase. Restricted to the mother cell during sporulation. Foci form a spiral track on the cell membrane and move in the cell. Associated with high bouyancy, cardiolipin- and phosphatidylglycerol-rich membrane fractions, association is not obligatory (PubMed:19383680). Present in detergent-resistant membrane (DRM) fractions, approximately 6 dynamic foci per cell; colocalizes with KinC and sometimes with FloA in DRMs. Foci are lost when cells are treated with squalene synthase inhibitor zaragozic acid (PubMed:20713508). Found in discrete, highly mobile foci, often colocalizes with NfeD2 but rarely with FloA (PubMed:22753055). Forms discrete foci on the cell membrane, about 20% of foci are at the septal site. At the septa colocalizes with FloA and FtsH (PubMed:22882210, PubMed:23249255). Colocalizes with FtsX, OppA, SdhA and SecY in DRMs (PubMed:23651456). Careful analysis gives an average of 13 FloA and 6 FloT foci per cell; FloA foci are smaller that FloT foci (PubMed:25909364). Another study shows FloA and FloT foci are similar in size, forming membrane assemblies of 85-110 nm. FloA are more mobile than FloT foci and they do not overlap. This study found no evidence of colocalization of FloA with FloT, and nearly complete colocalization of FloT with NfeD2 (PubMed:27362352).</text>
</comment>
<comment type="induction">
    <text evidence="1 3 6 9">Transcription starts during stationary phase. Few foci are seen in exponential phase cells; the number of foci increases as cells enter stationary phase (at protein level) (PubMed:19383680, PubMed:22753055, PubMed:23651456). Few foci are seen on rich media, when cells are grown in minimal medium more foci are seen (at protein level) (PubMed:22753055). Expressed at low levels in rich media during exponential growth, more highly expressed in stationary phase on sporulation/biofilm-inducing media, activated by spo0A probably via AbrB (at protein level). Surfactin induces expression via spo0A (PubMed:25909364).</text>
</comment>
<comment type="domain">
    <text evidence="3 8 9">A hairpin loop (about residues 4-24) tethers the protein in the inner membrane. The isolated PHB domain (also called SPFH) oligomerizes, but does not bind lipids (PubMed:25635948). The C-terminal 24 residues are not required for correct localization, but the last 300 residues are required (PubMed:22753055). The C-terminus determines the oligomerization state of the protein; there are few large foci for FloT. Swapping with the C-terminus of FloA leads to many smaller foci (PubMed:25909364).</text>
</comment>
<comment type="disruption phenotype">
    <text evidence="1 2 3 4 5 6 10 11 13">Delay in sporulation onset, 65% reduction in sporulation efficiency (PubMed:19383680, PubMed:22882210). No effect on KinC activity, a double floT-floA deletion decreases the number of proteins in the DRM, blocks the ability of KinC to stimulate biofilm formation (PubMed:20713508). Single floT deletion has defective motility, loss of NfeD2 localization, no change in FloA localization. Double floA-floT mutants have marked defects in cell morphology, motility, and transformation efficiency (PubMed:22753055). Double floA-floT deletion makes no biofilm, has greatly reduced FtsH, sporulates less than either single mutant (PubMed:22882210). Double dynA-floT deletions are highly elongated, filamentous and have strong defects in cell shape; cells grow very slowly with an extended lag phase (PubMed:23249255). Single mutation has a decrease in membrane fluidity and 35% decrease in protein secretion, a double floT-floA deletion has a stronger decrease in membrane fluidity and the same decrease in protein secretion (PubMed:23651456). Double dynA-floT deletion strains are less motile than single floT deletions (PubMed:26842743). Double floA-floT deletion has reduced oligomerization of KinC (PubMed:26297017). Double floA-floT deletion cells are somewhat elongated, the site of cell wall synthesis is affected, increasing at division septa. The speed of MreB movement around the cell is significantly decreased in rich medium in the floA-floT mutant (PubMed:32662773).</text>
</comment>
<comment type="similarity">
    <text evidence="16">Belongs to the band 7/mec-2 family. Flotillin subfamily.</text>
</comment>
<proteinExistence type="evidence at protein level"/>
<evidence type="ECO:0000269" key="1">
    <source>
    </source>
</evidence>
<evidence type="ECO:0000269" key="2">
    <source>
    </source>
</evidence>
<evidence type="ECO:0000269" key="3">
    <source>
    </source>
</evidence>
<evidence type="ECO:0000269" key="4">
    <source>
    </source>
</evidence>
<evidence type="ECO:0000269" key="5">
    <source>
    </source>
</evidence>
<evidence type="ECO:0000269" key="6">
    <source>
    </source>
</evidence>
<evidence type="ECO:0000269" key="7">
    <source>
    </source>
</evidence>
<evidence type="ECO:0000269" key="8">
    <source>
    </source>
</evidence>
<evidence type="ECO:0000269" key="9">
    <source>
    </source>
</evidence>
<evidence type="ECO:0000269" key="10">
    <source>
    </source>
</evidence>
<evidence type="ECO:0000269" key="11">
    <source>
    </source>
</evidence>
<evidence type="ECO:0000269" key="12">
    <source>
    </source>
</evidence>
<evidence type="ECO:0000269" key="13">
    <source>
    </source>
</evidence>
<evidence type="ECO:0000303" key="14">
    <source>
    </source>
</evidence>
<evidence type="ECO:0000303" key="15">
    <source>
    </source>
</evidence>
<evidence type="ECO:0000305" key="16"/>
<evidence type="ECO:0000305" key="17">
    <source>
    </source>
</evidence>
<evidence type="ECO:0000305" key="18">
    <source>
    </source>
</evidence>
<evidence type="ECO:0000305" key="19">
    <source>
    </source>
</evidence>
<evidence type="ECO:0000305" key="20">
    <source>
    </source>
</evidence>
<evidence type="ECO:0000305" key="21">
    <source>
    </source>
</evidence>
<dbReference type="EMBL" id="AL009126">
    <property type="protein sequence ID" value="CAB15079.1"/>
    <property type="molecule type" value="Genomic_DNA"/>
</dbReference>
<dbReference type="PIR" id="A70006">
    <property type="entry name" value="A70006"/>
</dbReference>
<dbReference type="RefSeq" id="NP_390979.1">
    <property type="nucleotide sequence ID" value="NC_000964.3"/>
</dbReference>
<dbReference type="RefSeq" id="WP_003228960.1">
    <property type="nucleotide sequence ID" value="NZ_OZ025638.1"/>
</dbReference>
<dbReference type="SMR" id="O32076"/>
<dbReference type="FunCoup" id="O32076">
    <property type="interactions" value="46"/>
</dbReference>
<dbReference type="STRING" id="224308.BSU31010"/>
<dbReference type="PaxDb" id="224308-BSU31010"/>
<dbReference type="EnsemblBacteria" id="CAB15079">
    <property type="protein sequence ID" value="CAB15079"/>
    <property type="gene ID" value="BSU_31010"/>
</dbReference>
<dbReference type="GeneID" id="937138"/>
<dbReference type="KEGG" id="bsu:BSU31010"/>
<dbReference type="PATRIC" id="fig|224308.179.peg.3361"/>
<dbReference type="eggNOG" id="COG2268">
    <property type="taxonomic scope" value="Bacteria"/>
</dbReference>
<dbReference type="InParanoid" id="O32076"/>
<dbReference type="OrthoDB" id="9786220at2"/>
<dbReference type="PhylomeDB" id="O32076"/>
<dbReference type="BioCyc" id="BSUB:BSU31010-MONOMER"/>
<dbReference type="Proteomes" id="UP000001570">
    <property type="component" value="Chromosome"/>
</dbReference>
<dbReference type="GO" id="GO:0045121">
    <property type="term" value="C:membrane raft"/>
    <property type="evidence" value="ECO:0007669"/>
    <property type="project" value="UniProtKB-SubCell"/>
</dbReference>
<dbReference type="GO" id="GO:0005886">
    <property type="term" value="C:plasma membrane"/>
    <property type="evidence" value="ECO:0000318"/>
    <property type="project" value="GO_Central"/>
</dbReference>
<dbReference type="GO" id="GO:0002020">
    <property type="term" value="F:protease binding"/>
    <property type="evidence" value="ECO:0000318"/>
    <property type="project" value="GO_Central"/>
</dbReference>
<dbReference type="GO" id="GO:0072659">
    <property type="term" value="P:protein localization to plasma membrane"/>
    <property type="evidence" value="ECO:0000318"/>
    <property type="project" value="GO_Central"/>
</dbReference>
<dbReference type="GO" id="GO:0008360">
    <property type="term" value="P:regulation of cell shape"/>
    <property type="evidence" value="ECO:0007669"/>
    <property type="project" value="UniProtKB-KW"/>
</dbReference>
<dbReference type="CDD" id="cd03399">
    <property type="entry name" value="SPFH_flotillin"/>
    <property type="match status" value="1"/>
</dbReference>
<dbReference type="Gene3D" id="3.30.479.30">
    <property type="entry name" value="Band 7 domain"/>
    <property type="match status" value="1"/>
</dbReference>
<dbReference type="InterPro" id="IPR001107">
    <property type="entry name" value="Band_7"/>
</dbReference>
<dbReference type="InterPro" id="IPR036013">
    <property type="entry name" value="Band_7/SPFH_dom_sf"/>
</dbReference>
<dbReference type="InterPro" id="IPR031905">
    <property type="entry name" value="Flotillin_C"/>
</dbReference>
<dbReference type="InterPro" id="IPR027705">
    <property type="entry name" value="Flotillin_fam"/>
</dbReference>
<dbReference type="PANTHER" id="PTHR13806:SF46">
    <property type="entry name" value="FLOTILLIN-1-RELATED"/>
    <property type="match status" value="1"/>
</dbReference>
<dbReference type="PANTHER" id="PTHR13806">
    <property type="entry name" value="FLOTILLIN-RELATED"/>
    <property type="match status" value="1"/>
</dbReference>
<dbReference type="Pfam" id="PF01145">
    <property type="entry name" value="Band_7"/>
    <property type="match status" value="1"/>
</dbReference>
<dbReference type="Pfam" id="PF15975">
    <property type="entry name" value="Flot"/>
    <property type="match status" value="1"/>
</dbReference>
<dbReference type="SMART" id="SM00244">
    <property type="entry name" value="PHB"/>
    <property type="match status" value="1"/>
</dbReference>
<dbReference type="SUPFAM" id="SSF117892">
    <property type="entry name" value="Band 7/SPFH domain"/>
    <property type="match status" value="1"/>
</dbReference>
<feature type="chain" id="PRO_0000049913" description="Flotillin-like protein FloT">
    <location>
        <begin position="1"/>
        <end position="509"/>
    </location>
</feature>
<feature type="topological domain" description="Cytoplasmic" evidence="8">
    <location>
        <begin position="1"/>
        <end position="3"/>
    </location>
</feature>
<feature type="intramembrane region" evidence="20">
    <location>
        <begin position="4"/>
        <end position="24"/>
    </location>
</feature>
<feature type="topological domain" description="Cytoplasmic" evidence="8 17">
    <location>
        <begin position="25"/>
        <end position="509"/>
    </location>
</feature>
<feature type="region of interest" description="PHB domain" evidence="20">
    <location>
        <begin position="119"/>
        <end position="301"/>
    </location>
</feature>
<feature type="region of interest" description="Required for correct localization" evidence="3">
    <location>
        <begin position="203"/>
        <end position="509"/>
    </location>
</feature>
<feature type="region of interest" description="Not required for correct localization" evidence="3">
    <location>
        <begin position="485"/>
        <end position="509"/>
    </location>
</feature>
<feature type="short sequence motif" description="EA repeat 1" evidence="9">
    <location>
        <begin position="342"/>
        <end position="344"/>
    </location>
</feature>
<feature type="short sequence motif" description="EA repeat 2" evidence="9">
    <location>
        <begin position="357"/>
        <end position="360"/>
    </location>
</feature>
<feature type="short sequence motif" description="EA repeat 3" evidence="9">
    <location>
        <begin position="370"/>
        <end position="373"/>
    </location>
</feature>
<feature type="short sequence motif" description="EA repeat 4" evidence="9">
    <location>
        <begin position="390"/>
        <end position="394"/>
    </location>
</feature>
<feature type="mutagenesis site" description="Homooligomerizes poorly, decreased number of foci." evidence="9">
    <original>AEA</original>
    <variation>GLG</variation>
    <location>
        <begin position="342"/>
        <end position="344"/>
    </location>
</feature>
<feature type="mutagenesis site" description="No longer homooligomerizes, poor aggregation, severe decrease in the number of foci. Protein is dispersed in the cell membrane." evidence="9">
    <original>AEAE</original>
    <variation>GLGL</variation>
    <location>
        <begin position="357"/>
        <end position="360"/>
    </location>
</feature>
<feature type="mutagenesis site" description="Homooligomerizes, no change in number of foci." evidence="9">
    <original>AEAE</original>
    <variation>GLGL</variation>
    <location>
        <begin position="370"/>
        <end position="373"/>
    </location>
</feature>
<feature type="mutagenesis site" description="No longer homooligomerizes, poor aggregation, severe decrease in the number of foci." evidence="9">
    <original>AEAEA</original>
    <variation>GLGLG</variation>
    <location>
        <begin position="390"/>
        <end position="394"/>
    </location>
</feature>
<keyword id="KW-1003">Cell membrane</keyword>
<keyword id="KW-0133">Cell shape</keyword>
<keyword id="KW-0472">Membrane</keyword>
<keyword id="KW-1185">Reference proteome</keyword>
<keyword id="KW-0677">Repeat</keyword>
<reference key="1">
    <citation type="journal article" date="1997" name="Nature">
        <title>The complete genome sequence of the Gram-positive bacterium Bacillus subtilis.</title>
        <authorList>
            <person name="Kunst F."/>
            <person name="Ogasawara N."/>
            <person name="Moszer I."/>
            <person name="Albertini A.M."/>
            <person name="Alloni G."/>
            <person name="Azevedo V."/>
            <person name="Bertero M.G."/>
            <person name="Bessieres P."/>
            <person name="Bolotin A."/>
            <person name="Borchert S."/>
            <person name="Borriss R."/>
            <person name="Boursier L."/>
            <person name="Brans A."/>
            <person name="Braun M."/>
            <person name="Brignell S.C."/>
            <person name="Bron S."/>
            <person name="Brouillet S."/>
            <person name="Bruschi C.V."/>
            <person name="Caldwell B."/>
            <person name="Capuano V."/>
            <person name="Carter N.M."/>
            <person name="Choi S.-K."/>
            <person name="Codani J.-J."/>
            <person name="Connerton I.F."/>
            <person name="Cummings N.J."/>
            <person name="Daniel R.A."/>
            <person name="Denizot F."/>
            <person name="Devine K.M."/>
            <person name="Duesterhoeft A."/>
            <person name="Ehrlich S.D."/>
            <person name="Emmerson P.T."/>
            <person name="Entian K.-D."/>
            <person name="Errington J."/>
            <person name="Fabret C."/>
            <person name="Ferrari E."/>
            <person name="Foulger D."/>
            <person name="Fritz C."/>
            <person name="Fujita M."/>
            <person name="Fujita Y."/>
            <person name="Fuma S."/>
            <person name="Galizzi A."/>
            <person name="Galleron N."/>
            <person name="Ghim S.-Y."/>
            <person name="Glaser P."/>
            <person name="Goffeau A."/>
            <person name="Golightly E.J."/>
            <person name="Grandi G."/>
            <person name="Guiseppi G."/>
            <person name="Guy B.J."/>
            <person name="Haga K."/>
            <person name="Haiech J."/>
            <person name="Harwood C.R."/>
            <person name="Henaut A."/>
            <person name="Hilbert H."/>
            <person name="Holsappel S."/>
            <person name="Hosono S."/>
            <person name="Hullo M.-F."/>
            <person name="Itaya M."/>
            <person name="Jones L.-M."/>
            <person name="Joris B."/>
            <person name="Karamata D."/>
            <person name="Kasahara Y."/>
            <person name="Klaerr-Blanchard M."/>
            <person name="Klein C."/>
            <person name="Kobayashi Y."/>
            <person name="Koetter P."/>
            <person name="Koningstein G."/>
            <person name="Krogh S."/>
            <person name="Kumano M."/>
            <person name="Kurita K."/>
            <person name="Lapidus A."/>
            <person name="Lardinois S."/>
            <person name="Lauber J."/>
            <person name="Lazarevic V."/>
            <person name="Lee S.-M."/>
            <person name="Levine A."/>
            <person name="Liu H."/>
            <person name="Masuda S."/>
            <person name="Mauel C."/>
            <person name="Medigue C."/>
            <person name="Medina N."/>
            <person name="Mellado R.P."/>
            <person name="Mizuno M."/>
            <person name="Moestl D."/>
            <person name="Nakai S."/>
            <person name="Noback M."/>
            <person name="Noone D."/>
            <person name="O'Reilly M."/>
            <person name="Ogawa K."/>
            <person name="Ogiwara A."/>
            <person name="Oudega B."/>
            <person name="Park S.-H."/>
            <person name="Parro V."/>
            <person name="Pohl T.M."/>
            <person name="Portetelle D."/>
            <person name="Porwollik S."/>
            <person name="Prescott A.M."/>
            <person name="Presecan E."/>
            <person name="Pujic P."/>
            <person name="Purnelle B."/>
            <person name="Rapoport G."/>
            <person name="Rey M."/>
            <person name="Reynolds S."/>
            <person name="Rieger M."/>
            <person name="Rivolta C."/>
            <person name="Rocha E."/>
            <person name="Roche B."/>
            <person name="Rose M."/>
            <person name="Sadaie Y."/>
            <person name="Sato T."/>
            <person name="Scanlan E."/>
            <person name="Schleich S."/>
            <person name="Schroeter R."/>
            <person name="Scoffone F."/>
            <person name="Sekiguchi J."/>
            <person name="Sekowska A."/>
            <person name="Seror S.J."/>
            <person name="Serror P."/>
            <person name="Shin B.-S."/>
            <person name="Soldo B."/>
            <person name="Sorokin A."/>
            <person name="Tacconi E."/>
            <person name="Takagi T."/>
            <person name="Takahashi H."/>
            <person name="Takemaru K."/>
            <person name="Takeuchi M."/>
            <person name="Tamakoshi A."/>
            <person name="Tanaka T."/>
            <person name="Terpstra P."/>
            <person name="Tognoni A."/>
            <person name="Tosato V."/>
            <person name="Uchiyama S."/>
            <person name="Vandenbol M."/>
            <person name="Vannier F."/>
            <person name="Vassarotti A."/>
            <person name="Viari A."/>
            <person name="Wambutt R."/>
            <person name="Wedler E."/>
            <person name="Wedler H."/>
            <person name="Weitzenegger T."/>
            <person name="Winters P."/>
            <person name="Wipat A."/>
            <person name="Yamamoto H."/>
            <person name="Yamane K."/>
            <person name="Yasumoto K."/>
            <person name="Yata K."/>
            <person name="Yoshida K."/>
            <person name="Yoshikawa H.-F."/>
            <person name="Zumstein E."/>
            <person name="Yoshikawa H."/>
            <person name="Danchin A."/>
        </authorList>
    </citation>
    <scope>NUCLEOTIDE SEQUENCE [LARGE SCALE GENOMIC DNA]</scope>
    <source>
        <strain>168</strain>
    </source>
</reference>
<reference key="2">
    <citation type="journal article" date="2009" name="Microbiology">
        <title>Characterization and subcellular localization of a bacterial flotillin homologue.</title>
        <authorList>
            <person name="Donovan C."/>
            <person name="Bramkamp M."/>
        </authorList>
    </citation>
    <scope>FUNCTION</scope>
    <scope>SUBCELLULAR LOCATION</scope>
    <scope>INDUCTION</scope>
    <scope>DISRUPTION PHENOTYPE</scope>
    <source>
        <strain>168</strain>
    </source>
</reference>
<reference key="3">
    <citation type="journal article" date="2010" name="Genes Dev.">
        <title>Functional microdomains in bacterial membranes.</title>
        <authorList>
            <person name="Lopez D."/>
            <person name="Kolter R."/>
        </authorList>
    </citation>
    <scope>FUNCTION</scope>
    <scope>SUBCELLULAR LOCATION</scope>
    <scope>DISRUPTION PHENOTYPE</scope>
    <source>
        <strain>168 / Marburg / ATCC 6051 / DSM 10 / JCM 1465 / NBRC 13719 / NCIMB 3610 / NRRL NRS-744 / VKM B-501</strain>
    </source>
</reference>
<reference key="4">
    <citation type="journal article" date="2012" name="J. Bacteriol.">
        <title>Synthetic motility and cell shape defects associated with deletions of flotillin/reggie paralogs in Bacillus subtilis and interplay of these proteins with NfeD proteins.</title>
        <authorList>
            <person name="Dempwolff F."/>
            <person name="Moeller H.M."/>
            <person name="Graumann P.L."/>
        </authorList>
    </citation>
    <scope>FUNCTION</scope>
    <scope>SUBCELLULAR LOCATION</scope>
    <scope>INDUCTION</scope>
    <scope>DOMAIN</scope>
    <scope>DISRUPTION PHENOTYPE</scope>
    <source>
        <strain>168 / PY79</strain>
    </source>
</reference>
<reference key="5">
    <citation type="journal article" date="2012" name="Mol. Microbiol.">
        <title>The biofilm formation defect of a Bacillus subtilis flotillin-defective mutant involves the protease FtsH.</title>
        <authorList>
            <person name="Yepes A."/>
            <person name="Schneider J."/>
            <person name="Mielich B."/>
            <person name="Koch G."/>
            <person name="Garcia-Betancur J.C."/>
            <person name="Ramamurthi K.S."/>
            <person name="Vlamakis H."/>
            <person name="Lopez D."/>
        </authorList>
    </citation>
    <scope>INTERACTION WITH FTSH</scope>
    <scope>SUBCELLULAR LOCATION</scope>
    <scope>DISRUPTION PHENOTYPE</scope>
    <source>
        <strain>168 / Marburg / ATCC 6051 / DSM 10 / JCM 1465 / NBRC 13719 / NCIMB 3610 / NRRL NRS-744 / VKM B-501</strain>
    </source>
</reference>
<reference key="6">
    <citation type="journal article" date="2012" name="BMC Microbiol.">
        <title>The deletion of bacterial dynamin and flotillin genes results in pleiotrophic effects on cell division, cell growth and in cell shape maintenance.</title>
        <authorList>
            <person name="Dempwolff F."/>
            <person name="Wischhusen H.M."/>
            <person name="Specht M."/>
            <person name="Graumann P.L."/>
        </authorList>
    </citation>
    <scope>FUNCTION</scope>
    <scope>SUBCELLULAR LOCATION</scope>
    <scope>DISRUPTION PHENOTYPE</scope>
    <source>
        <strain>168 / PY79</strain>
    </source>
</reference>
<reference key="7">
    <citation type="journal article" date="2013" name="Mol. Microbiol.">
        <title>Flotillins functionally organize the bacterial membrane.</title>
        <authorList>
            <person name="Bach J.N."/>
            <person name="Bramkamp M."/>
        </authorList>
    </citation>
    <scope>FUNCTION</scope>
    <scope>SUBUNIT</scope>
    <scope>INTERACTION WITH FLOA; FTSH; FTSX; OPPA; SDHA AND SECY</scope>
    <scope>SUBCELLULAR LOCATION</scope>
    <scope>INDUCTION</scope>
    <scope>DISRUPTION PHENOTYPE</scope>
    <source>
        <strain>168</strain>
    </source>
</reference>
<reference key="8">
    <citation type="journal article" date="2013" name="MBio">
        <title>Overproduction of flotillin influences cell differentiation and shape in Bacillus subtilis.</title>
        <authorList>
            <person name="Mielich-Suess B."/>
            <person name="Schneider J."/>
            <person name="Lopez D."/>
        </authorList>
    </citation>
    <scope>FUNCTION IN CELL DIVISION</scope>
    <scope>FUNCTION IN DIFFERENTIATION</scope>
</reference>
<reference key="9">
    <citation type="journal article" date="2014" name="Commun. Integr. Biol.">
        <title>Genetic links between bacterial dynamin and flotillin proteins.</title>
        <authorList>
            <person name="Dempwolff F."/>
            <person name="Graumann P.L."/>
        </authorList>
    </citation>
    <scope>DISRUPTION PHENOTYPE</scope>
    <source>
        <strain>168 / PY79</strain>
    </source>
</reference>
<reference key="10">
    <citation type="journal article" date="2015" name="PLoS ONE">
        <title>Dissecting the molecular properties of prokaryotic flotillins.</title>
        <authorList>
            <person name="Bach J.N."/>
            <person name="Bramkamp M."/>
        </authorList>
    </citation>
    <scope>SUBCELLULAR LOCATION</scope>
    <scope>TOPOLOGY</scope>
    <scope>DOMAIN</scope>
    <source>
        <strain>168</strain>
    </source>
</reference>
<reference key="11">
    <citation type="journal article" date="2015" name="PLoS Genet.">
        <title>Spatio-temporal remodeling of functional membrane microdomains organizes the signaling networks of a bacterium.</title>
        <authorList>
            <person name="Schneider J."/>
            <person name="Klein T."/>
            <person name="Mielich-Suess B."/>
            <person name="Koch G."/>
            <person name="Franke C."/>
            <person name="Kuipers O.P."/>
            <person name="Kovacs A.T."/>
            <person name="Sauer M."/>
            <person name="Lopez D."/>
        </authorList>
    </citation>
    <scope>FUNCTION</scope>
    <scope>SUBUNIT</scope>
    <scope>SUBCELLULAR LOCATION</scope>
    <scope>INDUCTION IN STATIONARY PHASE</scope>
    <scope>MUTAGENESIS OF 342-ALA--ALA-344; 357-ALA--GLU-360; 370-ALA--GLU-373 AND 390-ALA--ALA-394</scope>
    <source>
        <strain>168 / Marburg / ATCC 6051 / DSM 10 / JCM 1465 / NBRC 13719 / NCIMB 3610 / NRRL NRS-744 / VKM B-501</strain>
    </source>
</reference>
<reference key="12">
    <citation type="journal article" date="2015" name="Microbiology">
        <title>In vivo characterization of the scaffold activity of flotillin on the membrane kinase KinC of Bacillus subtilis.</title>
        <authorList>
            <person name="Schneider J."/>
            <person name="Mielich-Suess B."/>
            <person name="Boehme R."/>
            <person name="Lopez D."/>
        </authorList>
    </citation>
    <scope>FUNCTION</scope>
    <scope>INTERACTION WITH FLOA; FTSH; KINC; KIND AND RESE</scope>
    <scope>DISRUPTION PHENOTYPE</scope>
    <source>
        <strain>168 / Marburg / ATCC 6051 / DSM 10 / JCM 1465 / NBRC 13719 / NCIMB 3610 / NRRL NRS-744 / VKM B-501</strain>
    </source>
</reference>
<reference key="13">
    <citation type="journal article" date="2016" name="PLoS Genet.">
        <title>Super Resolution Fluorescence Microscopy and Tracking of Bacterial Flotillin (Reggie) Paralogs Provide Evidence for Defined-Sized Protein Microdomains within the Bacterial Membrane but Absence of Clusters Containing Detergent-Resistant Proteins.</title>
        <authorList>
            <person name="Dempwolff F."/>
            <person name="Schmidt F.K."/>
            <person name="Hervas A.B."/>
            <person name="Stroh A."/>
            <person name="Roesch T.C."/>
            <person name="Riese C.N."/>
            <person name="Dersch S."/>
            <person name="Heimerl T."/>
            <person name="Lucena D."/>
            <person name="Huelsbusch N."/>
            <person name="Stuermer C.A."/>
            <person name="Takeshita N."/>
            <person name="Fischer R."/>
            <person name="Eckhardt B."/>
            <person name="Graumann P.L."/>
        </authorList>
    </citation>
    <scope>FUNCTION</scope>
    <scope>COLOCALIZATION WITH NFED2</scope>
    <scope>SUBCELLULAR LOCATION</scope>
    <source>
        <strain>168</strain>
        <strain>168 / PY79</strain>
    </source>
</reference>
<reference key="14">
    <citation type="journal article" date="2020" name="Elife">
        <title>Flotillin-mediated membrane fluidity controls peptidoglycan synthesis and MreB movement.</title>
        <authorList>
            <person name="Zielinska A."/>
            <person name="Savietto A."/>
            <person name="de Sousa Borges A."/>
            <person name="Martinez D."/>
            <person name="Berbon M."/>
            <person name="Roelofsen J.R."/>
            <person name="Hartman A.M."/>
            <person name="de Boer R."/>
            <person name="Van der Klei I.J."/>
            <person name="Hirsch A.K."/>
            <person name="Habenstein B."/>
            <person name="Bramkamp M."/>
            <person name="Scheffers D.J."/>
        </authorList>
    </citation>
    <scope>FUNCTION</scope>
    <scope>DISRUPTION PHENOTYPE</scope>
    <source>
        <strain>168</strain>
    </source>
</reference>
<name>FLOT_BACSU</name>
<protein>
    <recommendedName>
        <fullName evidence="15">Flotillin-like protein FloT</fullName>
    </recommendedName>
    <alternativeName>
        <fullName evidence="14">Bacterial flotillin homolog YuaG</fullName>
    </alternativeName>
</protein>
<accession>O32076</accession>